<organism>
    <name type="scientific">Mus musculus</name>
    <name type="common">Mouse</name>
    <dbReference type="NCBI Taxonomy" id="10090"/>
    <lineage>
        <taxon>Eukaryota</taxon>
        <taxon>Metazoa</taxon>
        <taxon>Chordata</taxon>
        <taxon>Craniata</taxon>
        <taxon>Vertebrata</taxon>
        <taxon>Euteleostomi</taxon>
        <taxon>Mammalia</taxon>
        <taxon>Eutheria</taxon>
        <taxon>Euarchontoglires</taxon>
        <taxon>Glires</taxon>
        <taxon>Rodentia</taxon>
        <taxon>Myomorpha</taxon>
        <taxon>Muroidea</taxon>
        <taxon>Muridae</taxon>
        <taxon>Murinae</taxon>
        <taxon>Mus</taxon>
        <taxon>Mus</taxon>
    </lineage>
</organism>
<dbReference type="EMBL" id="AF318278">
    <property type="protein sequence ID" value="AAK62817.1"/>
    <property type="molecule type" value="mRNA"/>
</dbReference>
<dbReference type="EMBL" id="BC048936">
    <property type="protein sequence ID" value="AAH48936.1"/>
    <property type="molecule type" value="mRNA"/>
</dbReference>
<dbReference type="EMBL" id="BC075680">
    <property type="protein sequence ID" value="AAH75680.1"/>
    <property type="molecule type" value="mRNA"/>
</dbReference>
<dbReference type="CCDS" id="CCDS20268.1">
    <molecule id="Q924H9-1"/>
</dbReference>
<dbReference type="RefSeq" id="NP_291084.1">
    <molecule id="Q924H9-1"/>
    <property type="nucleotide sequence ID" value="NM_033606.3"/>
</dbReference>
<dbReference type="RefSeq" id="XP_006506870.1">
    <molecule id="Q924H9-1"/>
    <property type="nucleotide sequence ID" value="XM_006506807.5"/>
</dbReference>
<dbReference type="RefSeq" id="XP_006506871.1">
    <molecule id="Q924H9-1"/>
    <property type="nucleotide sequence ID" value="XM_006506808.3"/>
</dbReference>
<dbReference type="RefSeq" id="XP_006506872.1">
    <molecule id="Q924H9-1"/>
    <property type="nucleotide sequence ID" value="XM_006506809.2"/>
</dbReference>
<dbReference type="SMR" id="Q924H9"/>
<dbReference type="FunCoup" id="Q924H9">
    <property type="interactions" value="5"/>
</dbReference>
<dbReference type="STRING" id="10090.ENSMUSP00000076708"/>
<dbReference type="PhosphoSitePlus" id="Q924H9"/>
<dbReference type="PaxDb" id="10090-ENSMUSP00000076708"/>
<dbReference type="PeptideAtlas" id="Q924H9"/>
<dbReference type="ProteomicsDB" id="277402">
    <molecule id="Q924H9-1"/>
</dbReference>
<dbReference type="ProteomicsDB" id="277403">
    <molecule id="Q924H9-2"/>
</dbReference>
<dbReference type="Antibodypedia" id="47481">
    <property type="antibodies" value="130 antibodies from 25 providers"/>
</dbReference>
<dbReference type="Ensembl" id="ENSMUST00000077502.5">
    <molecule id="Q924H9-1"/>
    <property type="protein sequence ID" value="ENSMUSP00000076708.3"/>
    <property type="gene ID" value="ENSMUSG00000009145.7"/>
</dbReference>
<dbReference type="GeneID" id="93838"/>
<dbReference type="KEGG" id="mmu:93838"/>
<dbReference type="UCSC" id="uc009cmc.1">
    <molecule id="Q924H9-1"/>
    <property type="organism name" value="mouse"/>
</dbReference>
<dbReference type="UCSC" id="uc009cmd.1">
    <molecule id="Q924H9-2"/>
    <property type="organism name" value="mouse"/>
</dbReference>
<dbReference type="AGR" id="MGI:2136388"/>
<dbReference type="CTD" id="165545"/>
<dbReference type="MGI" id="MGI:2136388">
    <property type="gene designation" value="Dqx1"/>
</dbReference>
<dbReference type="VEuPathDB" id="HostDB:ENSMUSG00000009145"/>
<dbReference type="eggNOG" id="KOG0925">
    <property type="taxonomic scope" value="Eukaryota"/>
</dbReference>
<dbReference type="GeneTree" id="ENSGT00940000159579"/>
<dbReference type="HOGENOM" id="CLU_001832_5_7_1"/>
<dbReference type="InParanoid" id="Q924H9"/>
<dbReference type="OMA" id="PPQWVLY"/>
<dbReference type="OrthoDB" id="10253254at2759"/>
<dbReference type="PhylomeDB" id="Q924H9"/>
<dbReference type="TreeFam" id="TF105735"/>
<dbReference type="BioGRID-ORCS" id="93838">
    <property type="hits" value="2 hits in 79 CRISPR screens"/>
</dbReference>
<dbReference type="ChiTaRS" id="Dqx1">
    <property type="organism name" value="mouse"/>
</dbReference>
<dbReference type="PRO" id="PR:Q924H9"/>
<dbReference type="Proteomes" id="UP000000589">
    <property type="component" value="Chromosome 6"/>
</dbReference>
<dbReference type="RNAct" id="Q924H9">
    <property type="molecule type" value="protein"/>
</dbReference>
<dbReference type="Bgee" id="ENSMUSG00000009145">
    <property type="expression patterns" value="Expressed in small intestine Peyer's patch and 67 other cell types or tissues"/>
</dbReference>
<dbReference type="ExpressionAtlas" id="Q924H9">
    <property type="expression patterns" value="baseline and differential"/>
</dbReference>
<dbReference type="GO" id="GO:0005634">
    <property type="term" value="C:nucleus"/>
    <property type="evidence" value="ECO:0007669"/>
    <property type="project" value="UniProtKB-SubCell"/>
</dbReference>
<dbReference type="GO" id="GO:0005524">
    <property type="term" value="F:ATP binding"/>
    <property type="evidence" value="ECO:0007669"/>
    <property type="project" value="UniProtKB-KW"/>
</dbReference>
<dbReference type="GO" id="GO:0016887">
    <property type="term" value="F:ATP hydrolysis activity"/>
    <property type="evidence" value="ECO:0000247"/>
    <property type="project" value="MGI"/>
</dbReference>
<dbReference type="GO" id="GO:0004386">
    <property type="term" value="F:helicase activity"/>
    <property type="evidence" value="ECO:0007669"/>
    <property type="project" value="UniProtKB-KW"/>
</dbReference>
<dbReference type="CDD" id="cd18791">
    <property type="entry name" value="SF2_C_RHA"/>
    <property type="match status" value="1"/>
</dbReference>
<dbReference type="FunFam" id="3.40.50.300:FF:001162">
    <property type="entry name" value="ATP-dependent RNA helicase DQX1"/>
    <property type="match status" value="1"/>
</dbReference>
<dbReference type="FunFam" id="1.20.120.1080:FF:000010">
    <property type="entry name" value="ATP-dependent RNA helicase DQX1 isoform X1"/>
    <property type="match status" value="1"/>
</dbReference>
<dbReference type="FunFam" id="3.40.50.300:FF:001049">
    <property type="entry name" value="ATP-dependent RNA helicase DQX1 isoform X1"/>
    <property type="match status" value="1"/>
</dbReference>
<dbReference type="Gene3D" id="1.20.120.1080">
    <property type="match status" value="1"/>
</dbReference>
<dbReference type="Gene3D" id="3.40.50.300">
    <property type="entry name" value="P-loop containing nucleotide triphosphate hydrolases"/>
    <property type="match status" value="2"/>
</dbReference>
<dbReference type="InterPro" id="IPR011709">
    <property type="entry name" value="DEAD-box_helicase_OB_fold"/>
</dbReference>
<dbReference type="InterPro" id="IPR048333">
    <property type="entry name" value="HA2_WH"/>
</dbReference>
<dbReference type="InterPro" id="IPR007502">
    <property type="entry name" value="Helicase-assoc_dom"/>
</dbReference>
<dbReference type="InterPro" id="IPR014001">
    <property type="entry name" value="Helicase_ATP-bd"/>
</dbReference>
<dbReference type="InterPro" id="IPR027417">
    <property type="entry name" value="P-loop_NTPase"/>
</dbReference>
<dbReference type="PANTHER" id="PTHR18934">
    <property type="entry name" value="ATP-DEPENDENT RNA HELICASE"/>
    <property type="match status" value="1"/>
</dbReference>
<dbReference type="PANTHER" id="PTHR18934:SF108">
    <property type="entry name" value="ATP-DEPENDENT RNA HELICASE DQX1"/>
    <property type="match status" value="1"/>
</dbReference>
<dbReference type="Pfam" id="PF21010">
    <property type="entry name" value="HA2_C"/>
    <property type="match status" value="1"/>
</dbReference>
<dbReference type="Pfam" id="PF04408">
    <property type="entry name" value="HA2_N"/>
    <property type="match status" value="1"/>
</dbReference>
<dbReference type="Pfam" id="PF07717">
    <property type="entry name" value="OB_NTP_bind"/>
    <property type="match status" value="1"/>
</dbReference>
<dbReference type="SMART" id="SM00487">
    <property type="entry name" value="DEXDc"/>
    <property type="match status" value="1"/>
</dbReference>
<dbReference type="SMART" id="SM00847">
    <property type="entry name" value="HA2"/>
    <property type="match status" value="1"/>
</dbReference>
<dbReference type="SUPFAM" id="SSF52540">
    <property type="entry name" value="P-loop containing nucleoside triphosphate hydrolases"/>
    <property type="match status" value="1"/>
</dbReference>
<dbReference type="PROSITE" id="PS51192">
    <property type="entry name" value="HELICASE_ATP_BIND_1"/>
    <property type="match status" value="1"/>
</dbReference>
<dbReference type="PROSITE" id="PS51194">
    <property type="entry name" value="HELICASE_CTER"/>
    <property type="match status" value="1"/>
</dbReference>
<feature type="chain" id="PRO_0000284378" description="ATP-dependent RNA helicase homolog DQX1">
    <location>
        <begin position="1"/>
        <end position="718"/>
    </location>
</feature>
<feature type="domain" description="Helicase ATP-binding" evidence="2">
    <location>
        <begin position="54"/>
        <end position="222"/>
    </location>
</feature>
<feature type="domain" description="Helicase C-terminal" evidence="3">
    <location>
        <begin position="245"/>
        <end position="447"/>
    </location>
</feature>
<feature type="region of interest" description="Disordered" evidence="4">
    <location>
        <begin position="690"/>
        <end position="718"/>
    </location>
</feature>
<feature type="short sequence motif" description="DEAQ box" evidence="7">
    <location>
        <begin position="167"/>
        <end position="170"/>
    </location>
</feature>
<feature type="compositionally biased region" description="Low complexity" evidence="4">
    <location>
        <begin position="696"/>
        <end position="708"/>
    </location>
</feature>
<feature type="binding site" evidence="2">
    <location>
        <begin position="67"/>
        <end position="74"/>
    </location>
    <ligand>
        <name>ATP</name>
        <dbReference type="ChEBI" id="CHEBI:30616"/>
    </ligand>
</feature>
<feature type="splice variant" id="VSP_024473" description="In isoform 2." evidence="6">
    <location>
        <begin position="1"/>
        <end position="417"/>
    </location>
</feature>
<protein>
    <recommendedName>
        <fullName>ATP-dependent RNA helicase homolog DQX1</fullName>
    </recommendedName>
    <alternativeName>
        <fullName>DEAQ box polypeptide 1</fullName>
    </alternativeName>
</protein>
<gene>
    <name type="primary">Dqx1</name>
</gene>
<accession>Q924H9</accession>
<accession>Q80ZJ5</accession>
<proteinExistence type="evidence at transcript level"/>
<sequence length="718" mass="78799">MASGLAEESELSPGESELAVNPFDGLPFSSCYYELLEQRRALPIWAARFLFLEHLESSPTGVVLVSGDPGSGKSTQIPQWCAEFALARGFQTGQVTVTQPYPLAAMSLASRVADEMDLTLGHEIGYSIPQEDCTGPNTMLRFCWDRLFLQEVASTRGPGAWSVLILDEAQERSVASDLLQGLLRDTRLRNLPGDPRVVVVTDPALEPKFQAFWGNSPIVRVPREPGGDPTLAYKDTVPTDLVEAACQAVLELCQQEEAPGDVLVYLPSEEEISLCCESLSGEMGTLAVPGPPPRVLPLHPGCAQAIQTVYEDTDVSVRKIVVTHWLADFSFSLPSIQHVIDSGLELRSVYNPRIRAESQVLRPISKCQAEARLLRAKGFPPGSCLRLYSKSTLELEAPPLPHPKVCEENLSSLVLLLMRKQIAEPGECHFLDRPAPEALMRALEDLDYLAALNDDGELSDLGVILSEFPLPPELAKALLASCEFNCVDEMLTLAAMLTAAPGFTRPPLSAGEAALRRALEHADGDHSSLIQVYEAFVQSGADEAWCQARGLNWESLCQARKLRAELVELMQRIELPLSQPAFGSEQNRRDLQKALLSGYFLKVARDTDGTGNYLLLTHKHVAQLSPYCSYRNRRTPAQPPTWVLYHSFSISKDNCLCIVSEIQPEMLVELAPPYFLSNLPPSESRDLLNQLREGTAEPPAAATETSSPQEYGDGCVLQ</sequence>
<evidence type="ECO:0000250" key="1"/>
<evidence type="ECO:0000255" key="2">
    <source>
        <dbReference type="PROSITE-ProRule" id="PRU00541"/>
    </source>
</evidence>
<evidence type="ECO:0000255" key="3">
    <source>
        <dbReference type="PROSITE-ProRule" id="PRU00542"/>
    </source>
</evidence>
<evidence type="ECO:0000256" key="4">
    <source>
        <dbReference type="SAM" id="MobiDB-lite"/>
    </source>
</evidence>
<evidence type="ECO:0000269" key="5">
    <source>
    </source>
</evidence>
<evidence type="ECO:0000303" key="6">
    <source>
    </source>
</evidence>
<evidence type="ECO:0000305" key="7">
    <source>
    </source>
</evidence>
<reference key="1">
    <citation type="journal article" date="2001" name="Mamm. Genome">
        <title>DQX1, an RNA-dependent ATPase homolog with a novel DEAQ box: expression pattern and genomic sequence comparison of the human and mouse genes.</title>
        <authorList>
            <person name="Ji W."/>
            <person name="Chen F."/>
            <person name="Do T."/>
            <person name="Do A."/>
            <person name="Roe B.A."/>
            <person name="Meisler M.H."/>
        </authorList>
    </citation>
    <scope>NUCLEOTIDE SEQUENCE [MRNA] (ISOFORM 1)</scope>
    <scope>FUNCTION</scope>
    <scope>TISSUE SPECIFICITY</scope>
    <scope>DISCUSSION OF SEQUENCE</scope>
    <source>
        <strain>C57BL/6J</strain>
    </source>
</reference>
<reference key="2">
    <citation type="journal article" date="2004" name="Genome Res.">
        <title>The status, quality, and expansion of the NIH full-length cDNA project: the Mammalian Gene Collection (MGC).</title>
        <authorList>
            <consortium name="The MGC Project Team"/>
        </authorList>
    </citation>
    <scope>NUCLEOTIDE SEQUENCE [LARGE SCALE MRNA] (ISOFORMS 1 AND 2)</scope>
    <source>
        <strain>C57BL/6J</strain>
        <strain>FVB/N</strain>
        <tissue>Colon</tissue>
        <tissue>Eye</tissue>
    </source>
</reference>
<comment type="function">
    <text evidence="7">Might be involved in RNA metabolism; it is missing helicase motif III and may not have helicase activity (PubMed:11353393).</text>
</comment>
<comment type="subcellular location">
    <subcellularLocation>
        <location evidence="1">Nucleus</location>
    </subcellularLocation>
</comment>
<comment type="alternative products">
    <event type="alternative splicing"/>
    <isoform>
        <id>Q924H9-1</id>
        <name>1</name>
        <sequence type="displayed"/>
    </isoform>
    <isoform>
        <id>Q924H9-2</id>
        <name>2</name>
        <sequence type="described" ref="VSP_024473"/>
    </isoform>
</comment>
<comment type="tissue specificity">
    <text evidence="5">Ubiquitous.</text>
</comment>
<keyword id="KW-0025">Alternative splicing</keyword>
<keyword id="KW-0067">ATP-binding</keyword>
<keyword id="KW-0547">Nucleotide-binding</keyword>
<keyword id="KW-0539">Nucleus</keyword>
<keyword id="KW-1185">Reference proteome</keyword>
<name>DQX1_MOUSE</name>